<sequence>MSKSSDRINLTNQFLIAMPNMADPTFSGTVVYLCDHSERGALGLVINRPTDIDLESLFNRIDLKLEIEPLLHIPVYFGGPVQTERGFVLHEPVEGSAYNSSMTVEGGLEMTTSKDVLEAVATGTGPKRFLLTLGHAGWGAGQLEEEISKNGWLTVAADPRIVFDTPAEERFEAALGLLGVSSSMLSGEAGHA</sequence>
<feature type="chain" id="PRO_1000046645" description="UPF0301 protein BMA10247_1859">
    <location>
        <begin position="1"/>
        <end position="192"/>
    </location>
</feature>
<protein>
    <recommendedName>
        <fullName evidence="1">UPF0301 protein BMA10247_1859</fullName>
    </recommendedName>
</protein>
<accession>A3MMB0</accession>
<dbReference type="EMBL" id="CP000548">
    <property type="protein sequence ID" value="ABO07023.1"/>
    <property type="molecule type" value="Genomic_DNA"/>
</dbReference>
<dbReference type="RefSeq" id="WP_004185441.1">
    <property type="nucleotide sequence ID" value="NZ_CP007802.1"/>
</dbReference>
<dbReference type="SMR" id="A3MMB0"/>
<dbReference type="KEGG" id="bmaz:BM44_1343"/>
<dbReference type="KEGG" id="bmn:BMA10247_1859"/>
<dbReference type="PATRIC" id="fig|320389.8.peg.1504"/>
<dbReference type="GO" id="GO:0005829">
    <property type="term" value="C:cytosol"/>
    <property type="evidence" value="ECO:0007669"/>
    <property type="project" value="TreeGrafter"/>
</dbReference>
<dbReference type="Gene3D" id="3.40.1740.10">
    <property type="entry name" value="VC0467-like"/>
    <property type="match status" value="1"/>
</dbReference>
<dbReference type="HAMAP" id="MF_00758">
    <property type="entry name" value="UPF0301"/>
    <property type="match status" value="1"/>
</dbReference>
<dbReference type="InterPro" id="IPR003774">
    <property type="entry name" value="AlgH-like"/>
</dbReference>
<dbReference type="NCBIfam" id="NF001266">
    <property type="entry name" value="PRK00228.1-1"/>
    <property type="match status" value="1"/>
</dbReference>
<dbReference type="NCBIfam" id="NF001267">
    <property type="entry name" value="PRK00228.1-2"/>
    <property type="match status" value="1"/>
</dbReference>
<dbReference type="PANTHER" id="PTHR30327">
    <property type="entry name" value="UNCHARACTERIZED PROTEIN YQGE"/>
    <property type="match status" value="1"/>
</dbReference>
<dbReference type="PANTHER" id="PTHR30327:SF1">
    <property type="entry name" value="UPF0301 PROTEIN YQGE"/>
    <property type="match status" value="1"/>
</dbReference>
<dbReference type="Pfam" id="PF02622">
    <property type="entry name" value="DUF179"/>
    <property type="match status" value="1"/>
</dbReference>
<dbReference type="SUPFAM" id="SSF143456">
    <property type="entry name" value="VC0467-like"/>
    <property type="match status" value="1"/>
</dbReference>
<organism>
    <name type="scientific">Burkholderia mallei (strain NCTC 10247)</name>
    <dbReference type="NCBI Taxonomy" id="320389"/>
    <lineage>
        <taxon>Bacteria</taxon>
        <taxon>Pseudomonadati</taxon>
        <taxon>Pseudomonadota</taxon>
        <taxon>Betaproteobacteria</taxon>
        <taxon>Burkholderiales</taxon>
        <taxon>Burkholderiaceae</taxon>
        <taxon>Burkholderia</taxon>
        <taxon>pseudomallei group</taxon>
    </lineage>
</organism>
<reference key="1">
    <citation type="journal article" date="2010" name="Genome Biol. Evol.">
        <title>Continuing evolution of Burkholderia mallei through genome reduction and large-scale rearrangements.</title>
        <authorList>
            <person name="Losada L."/>
            <person name="Ronning C.M."/>
            <person name="DeShazer D."/>
            <person name="Woods D."/>
            <person name="Fedorova N."/>
            <person name="Kim H.S."/>
            <person name="Shabalina S.A."/>
            <person name="Pearson T.R."/>
            <person name="Brinkac L."/>
            <person name="Tan P."/>
            <person name="Nandi T."/>
            <person name="Crabtree J."/>
            <person name="Badger J."/>
            <person name="Beckstrom-Sternberg S."/>
            <person name="Saqib M."/>
            <person name="Schutzer S.E."/>
            <person name="Keim P."/>
            <person name="Nierman W.C."/>
        </authorList>
    </citation>
    <scope>NUCLEOTIDE SEQUENCE [LARGE SCALE GENOMIC DNA]</scope>
    <source>
        <strain>NCTC 10247</strain>
    </source>
</reference>
<gene>
    <name type="ordered locus">BMA10247_1859</name>
</gene>
<proteinExistence type="inferred from homology"/>
<evidence type="ECO:0000255" key="1">
    <source>
        <dbReference type="HAMAP-Rule" id="MF_00758"/>
    </source>
</evidence>
<name>Y4359_BURM7</name>
<comment type="similarity">
    <text evidence="1">Belongs to the UPF0301 (AlgH) family.</text>
</comment>